<sequence length="303" mass="31395">MRPDGIAGFALTIAAPAKINLALHVVGQRADGHHLLESLVTFAECGDGIGLAAAEADHFTVSGRFAPDLSPSAENTSGNLVLRARDVLRRELASQGRAAGPVHLHLEKNLPVASGIGGGSADAAATLRGLLSLWGASLEPARLGSLALELGADVPMCLDGRPLIARGIGEEITSIPDLPSFAIVLVNPLVEVSTPVVFRLLIRKSNPPLVLPENLRSTAAWLAALASMRNDLEPPARALEPMIEAVSTALEDAGATLVRMSGSGATCFGLFADEKSASLAAETISASQPRWYVRATRTAGKSG</sequence>
<dbReference type="EC" id="2.7.1.148" evidence="1"/>
<dbReference type="EMBL" id="CP000738">
    <property type="protein sequence ID" value="ABR59313.1"/>
    <property type="molecule type" value="Genomic_DNA"/>
</dbReference>
<dbReference type="RefSeq" id="WP_011974659.1">
    <property type="nucleotide sequence ID" value="NC_009636.1"/>
</dbReference>
<dbReference type="RefSeq" id="YP_001326148.1">
    <property type="nucleotide sequence ID" value="NC_009636.1"/>
</dbReference>
<dbReference type="SMR" id="A6U6N3"/>
<dbReference type="STRING" id="366394.Smed_0456"/>
<dbReference type="KEGG" id="smd:Smed_0456"/>
<dbReference type="PATRIC" id="fig|366394.8.peg.3541"/>
<dbReference type="eggNOG" id="COG1947">
    <property type="taxonomic scope" value="Bacteria"/>
</dbReference>
<dbReference type="HOGENOM" id="CLU_053057_1_0_5"/>
<dbReference type="OrthoDB" id="9809438at2"/>
<dbReference type="UniPathway" id="UPA00056">
    <property type="reaction ID" value="UER00094"/>
</dbReference>
<dbReference type="Proteomes" id="UP000001108">
    <property type="component" value="Chromosome"/>
</dbReference>
<dbReference type="GO" id="GO:0050515">
    <property type="term" value="F:4-(cytidine 5'-diphospho)-2-C-methyl-D-erythritol kinase activity"/>
    <property type="evidence" value="ECO:0007669"/>
    <property type="project" value="UniProtKB-UniRule"/>
</dbReference>
<dbReference type="GO" id="GO:0005524">
    <property type="term" value="F:ATP binding"/>
    <property type="evidence" value="ECO:0007669"/>
    <property type="project" value="UniProtKB-UniRule"/>
</dbReference>
<dbReference type="GO" id="GO:0019288">
    <property type="term" value="P:isopentenyl diphosphate biosynthetic process, methylerythritol 4-phosphate pathway"/>
    <property type="evidence" value="ECO:0007669"/>
    <property type="project" value="UniProtKB-UniRule"/>
</dbReference>
<dbReference type="GO" id="GO:0016114">
    <property type="term" value="P:terpenoid biosynthetic process"/>
    <property type="evidence" value="ECO:0007669"/>
    <property type="project" value="InterPro"/>
</dbReference>
<dbReference type="Gene3D" id="3.30.230.10">
    <property type="match status" value="1"/>
</dbReference>
<dbReference type="Gene3D" id="3.30.70.890">
    <property type="entry name" value="GHMP kinase, C-terminal domain"/>
    <property type="match status" value="1"/>
</dbReference>
<dbReference type="HAMAP" id="MF_00061">
    <property type="entry name" value="IspE"/>
    <property type="match status" value="1"/>
</dbReference>
<dbReference type="InterPro" id="IPR013750">
    <property type="entry name" value="GHMP_kinase_C_dom"/>
</dbReference>
<dbReference type="InterPro" id="IPR036554">
    <property type="entry name" value="GHMP_kinase_C_sf"/>
</dbReference>
<dbReference type="InterPro" id="IPR006204">
    <property type="entry name" value="GHMP_kinase_N_dom"/>
</dbReference>
<dbReference type="InterPro" id="IPR004424">
    <property type="entry name" value="IspE"/>
</dbReference>
<dbReference type="InterPro" id="IPR020568">
    <property type="entry name" value="Ribosomal_Su5_D2-typ_SF"/>
</dbReference>
<dbReference type="InterPro" id="IPR014721">
    <property type="entry name" value="Ribsml_uS5_D2-typ_fold_subgr"/>
</dbReference>
<dbReference type="NCBIfam" id="TIGR00154">
    <property type="entry name" value="ispE"/>
    <property type="match status" value="1"/>
</dbReference>
<dbReference type="NCBIfam" id="NF011202">
    <property type="entry name" value="PRK14608.1"/>
    <property type="match status" value="1"/>
</dbReference>
<dbReference type="PANTHER" id="PTHR43527">
    <property type="entry name" value="4-DIPHOSPHOCYTIDYL-2-C-METHYL-D-ERYTHRITOL KINASE, CHLOROPLASTIC"/>
    <property type="match status" value="1"/>
</dbReference>
<dbReference type="PANTHER" id="PTHR43527:SF2">
    <property type="entry name" value="4-DIPHOSPHOCYTIDYL-2-C-METHYL-D-ERYTHRITOL KINASE, CHLOROPLASTIC"/>
    <property type="match status" value="1"/>
</dbReference>
<dbReference type="Pfam" id="PF08544">
    <property type="entry name" value="GHMP_kinases_C"/>
    <property type="match status" value="1"/>
</dbReference>
<dbReference type="Pfam" id="PF00288">
    <property type="entry name" value="GHMP_kinases_N"/>
    <property type="match status" value="1"/>
</dbReference>
<dbReference type="PIRSF" id="PIRSF010376">
    <property type="entry name" value="IspE"/>
    <property type="match status" value="1"/>
</dbReference>
<dbReference type="SUPFAM" id="SSF55060">
    <property type="entry name" value="GHMP Kinase, C-terminal domain"/>
    <property type="match status" value="1"/>
</dbReference>
<dbReference type="SUPFAM" id="SSF54211">
    <property type="entry name" value="Ribosomal protein S5 domain 2-like"/>
    <property type="match status" value="1"/>
</dbReference>
<reference key="1">
    <citation type="submission" date="2007-06" db="EMBL/GenBank/DDBJ databases">
        <title>Complete sequence of Sinorhizobium medicae WSM419 chromosome.</title>
        <authorList>
            <consortium name="US DOE Joint Genome Institute"/>
            <person name="Copeland A."/>
            <person name="Lucas S."/>
            <person name="Lapidus A."/>
            <person name="Barry K."/>
            <person name="Glavina del Rio T."/>
            <person name="Dalin E."/>
            <person name="Tice H."/>
            <person name="Pitluck S."/>
            <person name="Chain P."/>
            <person name="Malfatti S."/>
            <person name="Shin M."/>
            <person name="Vergez L."/>
            <person name="Schmutz J."/>
            <person name="Larimer F."/>
            <person name="Land M."/>
            <person name="Hauser L."/>
            <person name="Kyrpides N."/>
            <person name="Mikhailova N."/>
            <person name="Reeve W.G."/>
            <person name="Richardson P."/>
        </authorList>
    </citation>
    <scope>NUCLEOTIDE SEQUENCE [LARGE SCALE GENOMIC DNA]</scope>
    <source>
        <strain>WSM419</strain>
    </source>
</reference>
<keyword id="KW-0067">ATP-binding</keyword>
<keyword id="KW-0414">Isoprene biosynthesis</keyword>
<keyword id="KW-0418">Kinase</keyword>
<keyword id="KW-0547">Nucleotide-binding</keyword>
<keyword id="KW-0808">Transferase</keyword>
<name>ISPE_SINMW</name>
<evidence type="ECO:0000255" key="1">
    <source>
        <dbReference type="HAMAP-Rule" id="MF_00061"/>
    </source>
</evidence>
<organism>
    <name type="scientific">Sinorhizobium medicae (strain WSM419)</name>
    <name type="common">Ensifer medicae</name>
    <dbReference type="NCBI Taxonomy" id="366394"/>
    <lineage>
        <taxon>Bacteria</taxon>
        <taxon>Pseudomonadati</taxon>
        <taxon>Pseudomonadota</taxon>
        <taxon>Alphaproteobacteria</taxon>
        <taxon>Hyphomicrobiales</taxon>
        <taxon>Rhizobiaceae</taxon>
        <taxon>Sinorhizobium/Ensifer group</taxon>
        <taxon>Sinorhizobium</taxon>
    </lineage>
</organism>
<gene>
    <name evidence="1" type="primary">ispE</name>
    <name type="ordered locus">Smed_0456</name>
</gene>
<protein>
    <recommendedName>
        <fullName evidence="1">4-diphosphocytidyl-2-C-methyl-D-erythritol kinase</fullName>
        <shortName evidence="1">CMK</shortName>
        <ecNumber evidence="1">2.7.1.148</ecNumber>
    </recommendedName>
    <alternativeName>
        <fullName evidence="1">4-(cytidine-5'-diphospho)-2-C-methyl-D-erythritol kinase</fullName>
    </alternativeName>
</protein>
<proteinExistence type="inferred from homology"/>
<feature type="chain" id="PRO_1000007896" description="4-diphosphocytidyl-2-C-methyl-D-erythritol kinase">
    <location>
        <begin position="1"/>
        <end position="303"/>
    </location>
</feature>
<feature type="active site" evidence="1">
    <location>
        <position position="18"/>
    </location>
</feature>
<feature type="active site" evidence="1">
    <location>
        <position position="153"/>
    </location>
</feature>
<feature type="binding site" evidence="1">
    <location>
        <begin position="111"/>
        <end position="121"/>
    </location>
    <ligand>
        <name>ATP</name>
        <dbReference type="ChEBI" id="CHEBI:30616"/>
    </ligand>
</feature>
<accession>A6U6N3</accession>
<comment type="function">
    <text evidence="1">Catalyzes the phosphorylation of the position 2 hydroxy group of 4-diphosphocytidyl-2C-methyl-D-erythritol.</text>
</comment>
<comment type="catalytic activity">
    <reaction evidence="1">
        <text>4-CDP-2-C-methyl-D-erythritol + ATP = 4-CDP-2-C-methyl-D-erythritol 2-phosphate + ADP + H(+)</text>
        <dbReference type="Rhea" id="RHEA:18437"/>
        <dbReference type="ChEBI" id="CHEBI:15378"/>
        <dbReference type="ChEBI" id="CHEBI:30616"/>
        <dbReference type="ChEBI" id="CHEBI:57823"/>
        <dbReference type="ChEBI" id="CHEBI:57919"/>
        <dbReference type="ChEBI" id="CHEBI:456216"/>
        <dbReference type="EC" id="2.7.1.148"/>
    </reaction>
</comment>
<comment type="pathway">
    <text evidence="1">Isoprenoid biosynthesis; isopentenyl diphosphate biosynthesis via DXP pathway; isopentenyl diphosphate from 1-deoxy-D-xylulose 5-phosphate: step 3/6.</text>
</comment>
<comment type="similarity">
    <text evidence="1">Belongs to the GHMP kinase family. IspE subfamily.</text>
</comment>